<proteinExistence type="inferred from homology"/>
<comment type="function">
    <text evidence="2">Involved in mRNA degradation. Hydrolyzes single-stranded polyribonucleotides processively in the 3' to 5' direction.</text>
</comment>
<comment type="catalytic activity">
    <reaction evidence="2">
        <text>Exonucleolytic cleavage in the 3'- to 5'-direction to yield nucleoside 5'-phosphates.</text>
        <dbReference type="EC" id="3.1.13.1"/>
    </reaction>
</comment>
<comment type="subcellular location">
    <subcellularLocation>
        <location evidence="2">Cytoplasm</location>
    </subcellularLocation>
</comment>
<comment type="similarity">
    <text evidence="2">Belongs to the RNR ribonuclease family. RNase II subfamily.</text>
</comment>
<organism>
    <name type="scientific">Escherichia coli O157:H7 (strain EC4115 / EHEC)</name>
    <dbReference type="NCBI Taxonomy" id="444450"/>
    <lineage>
        <taxon>Bacteria</taxon>
        <taxon>Pseudomonadati</taxon>
        <taxon>Pseudomonadota</taxon>
        <taxon>Gammaproteobacteria</taxon>
        <taxon>Enterobacterales</taxon>
        <taxon>Enterobacteriaceae</taxon>
        <taxon>Escherichia</taxon>
    </lineage>
</organism>
<dbReference type="EC" id="3.1.13.1" evidence="2"/>
<dbReference type="EMBL" id="CP001164">
    <property type="protein sequence ID" value="ACI34834.1"/>
    <property type="molecule type" value="Genomic_DNA"/>
</dbReference>
<dbReference type="RefSeq" id="WP_000485019.1">
    <property type="nucleotide sequence ID" value="NC_011353.1"/>
</dbReference>
<dbReference type="SMR" id="B5YZR8"/>
<dbReference type="KEGG" id="ecf:ECH74115_1923"/>
<dbReference type="HOGENOM" id="CLU_002333_7_3_6"/>
<dbReference type="GO" id="GO:0005829">
    <property type="term" value="C:cytosol"/>
    <property type="evidence" value="ECO:0007669"/>
    <property type="project" value="UniProtKB-ARBA"/>
</dbReference>
<dbReference type="GO" id="GO:0008859">
    <property type="term" value="F:exoribonuclease II activity"/>
    <property type="evidence" value="ECO:0007669"/>
    <property type="project" value="UniProtKB-UniRule"/>
</dbReference>
<dbReference type="GO" id="GO:0003723">
    <property type="term" value="F:RNA binding"/>
    <property type="evidence" value="ECO:0007669"/>
    <property type="project" value="UniProtKB-KW"/>
</dbReference>
<dbReference type="GO" id="GO:0006402">
    <property type="term" value="P:mRNA catabolic process"/>
    <property type="evidence" value="ECO:0007669"/>
    <property type="project" value="UniProtKB-UniRule"/>
</dbReference>
<dbReference type="FunFam" id="2.40.50.140:FF:000079">
    <property type="entry name" value="Exoribonuclease 2"/>
    <property type="match status" value="1"/>
</dbReference>
<dbReference type="FunFam" id="2.40.50.140:FF:000081">
    <property type="entry name" value="Exoribonuclease 2"/>
    <property type="match status" value="1"/>
</dbReference>
<dbReference type="FunFam" id="2.40.50.640:FF:000001">
    <property type="entry name" value="Exoribonuclease 2"/>
    <property type="match status" value="1"/>
</dbReference>
<dbReference type="Gene3D" id="2.40.50.640">
    <property type="match status" value="1"/>
</dbReference>
<dbReference type="Gene3D" id="2.40.50.140">
    <property type="entry name" value="Nucleic acid-binding proteins"/>
    <property type="match status" value="2"/>
</dbReference>
<dbReference type="HAMAP" id="MF_01036">
    <property type="entry name" value="RNase_II"/>
    <property type="match status" value="1"/>
</dbReference>
<dbReference type="InterPro" id="IPR011129">
    <property type="entry name" value="CSD"/>
</dbReference>
<dbReference type="InterPro" id="IPR012340">
    <property type="entry name" value="NA-bd_OB-fold"/>
</dbReference>
<dbReference type="InterPro" id="IPR013223">
    <property type="entry name" value="RNase_B_OB_dom"/>
</dbReference>
<dbReference type="InterPro" id="IPR011804">
    <property type="entry name" value="RNase_II"/>
</dbReference>
<dbReference type="InterPro" id="IPR001900">
    <property type="entry name" value="RNase_II/R"/>
</dbReference>
<dbReference type="InterPro" id="IPR022966">
    <property type="entry name" value="RNase_II/R_CS"/>
</dbReference>
<dbReference type="InterPro" id="IPR004476">
    <property type="entry name" value="RNase_II/RNase_R"/>
</dbReference>
<dbReference type="InterPro" id="IPR050180">
    <property type="entry name" value="RNR_Ribonuclease"/>
</dbReference>
<dbReference type="InterPro" id="IPR003029">
    <property type="entry name" value="S1_domain"/>
</dbReference>
<dbReference type="NCBIfam" id="TIGR00358">
    <property type="entry name" value="3_prime_RNase"/>
    <property type="match status" value="1"/>
</dbReference>
<dbReference type="NCBIfam" id="NF003455">
    <property type="entry name" value="PRK05054.1"/>
    <property type="match status" value="1"/>
</dbReference>
<dbReference type="NCBIfam" id="TIGR02062">
    <property type="entry name" value="RNase_B"/>
    <property type="match status" value="1"/>
</dbReference>
<dbReference type="PANTHER" id="PTHR23355:SF37">
    <property type="entry name" value="EXORIBONUCLEASE 2"/>
    <property type="match status" value="1"/>
</dbReference>
<dbReference type="PANTHER" id="PTHR23355">
    <property type="entry name" value="RIBONUCLEASE"/>
    <property type="match status" value="1"/>
</dbReference>
<dbReference type="Pfam" id="PF08206">
    <property type="entry name" value="OB_RNB"/>
    <property type="match status" value="1"/>
</dbReference>
<dbReference type="Pfam" id="PF00773">
    <property type="entry name" value="RNB"/>
    <property type="match status" value="1"/>
</dbReference>
<dbReference type="Pfam" id="PF00575">
    <property type="entry name" value="S1"/>
    <property type="match status" value="1"/>
</dbReference>
<dbReference type="SMART" id="SM00357">
    <property type="entry name" value="CSP"/>
    <property type="match status" value="1"/>
</dbReference>
<dbReference type="SMART" id="SM00955">
    <property type="entry name" value="RNB"/>
    <property type="match status" value="1"/>
</dbReference>
<dbReference type="SUPFAM" id="SSF50249">
    <property type="entry name" value="Nucleic acid-binding proteins"/>
    <property type="match status" value="4"/>
</dbReference>
<dbReference type="PROSITE" id="PS01175">
    <property type="entry name" value="RIBONUCLEASE_II"/>
    <property type="match status" value="1"/>
</dbReference>
<gene>
    <name evidence="2" type="primary">rnb</name>
    <name type="ordered locus">ECH74115_1923</name>
</gene>
<sequence>MFQDNPLLAQLKQQLHSQTPRAEGVVKATEKGFGFLEVDAQKSYFIPPPQMKKVMHGDRIIAVIHSEKERESAEPEELVEPFLTRFVGKVQGKNDRLAIVPDHPLLKDAIPCRAARGLNHEFKEGDWAVAEMRRHPLKGDRSFYAELTQYITFGDDHFVPWWVTLARHNLEKEAPDGVATEMLDEGLVRKDLTALDFVTIDSASTEDMDDALFAKALPDDKLQLIVAIADPTAWIAEGSKLDKAAKIRAFTNYLPGFNIPMLPRELSDDLCSLRANEVRPVLACRMTLSADGTIEDNIEFFAATIESKAKLVYDQVSDWLENTGDWQPESEAIAEQVRLLAQICQRRGEWRHNHALVFKDRPDYRFILGEKGEVLDIVAEPRRIANRIVEEAMIAANICAARVLRDKLGFGIYNVHMGFDPANADALAALLKTHGLHVDAEEVLTLDGFCKLRRELDAQPTGFLDSRIRRFQSFAEISTEPGPHFGLGLEAYATWTSPIRKYGDMINHRLLKAVIKGETATRPQDEITVQMAERRRLNRMAERDVGDWLYARFLKDKAGTDTRFAAEIVDISRGGMRVRLVDNGAIAFIPAPFLHAVRDELVCSQENGTVQIKGETVYKVTDVIDVTIAEVRMETRSIIARPVA</sequence>
<reference key="1">
    <citation type="journal article" date="2011" name="Proc. Natl. Acad. Sci. U.S.A.">
        <title>Genomic anatomy of Escherichia coli O157:H7 outbreaks.</title>
        <authorList>
            <person name="Eppinger M."/>
            <person name="Mammel M.K."/>
            <person name="Leclerc J.E."/>
            <person name="Ravel J."/>
            <person name="Cebula T.A."/>
        </authorList>
    </citation>
    <scope>NUCLEOTIDE SEQUENCE [LARGE SCALE GENOMIC DNA]</scope>
    <source>
        <strain>EC4115 / EHEC</strain>
    </source>
</reference>
<feature type="chain" id="PRO_1000135862" description="Exoribonuclease 2">
    <location>
        <begin position="1"/>
        <end position="644"/>
    </location>
</feature>
<feature type="domain" description="RNB" evidence="1">
    <location>
        <begin position="189"/>
        <end position="516"/>
    </location>
</feature>
<feature type="domain" description="S1 motif" evidence="2">
    <location>
        <begin position="561"/>
        <end position="643"/>
    </location>
</feature>
<accession>B5YZR8</accession>
<name>RNB_ECO5E</name>
<keyword id="KW-0963">Cytoplasm</keyword>
<keyword id="KW-0269">Exonuclease</keyword>
<keyword id="KW-0378">Hydrolase</keyword>
<keyword id="KW-0540">Nuclease</keyword>
<keyword id="KW-0694">RNA-binding</keyword>
<protein>
    <recommendedName>
        <fullName evidence="2">Exoribonuclease 2</fullName>
        <ecNumber evidence="2">3.1.13.1</ecNumber>
    </recommendedName>
    <alternativeName>
        <fullName evidence="2">Exoribonuclease II</fullName>
        <shortName evidence="2">RNase II</shortName>
        <shortName evidence="2">Ribonuclease II</shortName>
    </alternativeName>
</protein>
<evidence type="ECO:0000255" key="1"/>
<evidence type="ECO:0000255" key="2">
    <source>
        <dbReference type="HAMAP-Rule" id="MF_01036"/>
    </source>
</evidence>